<keyword id="KW-0028">Amino-acid biosynthesis</keyword>
<keyword id="KW-0057">Aromatic amino acid biosynthesis</keyword>
<keyword id="KW-0456">Lyase</keyword>
<keyword id="KW-0460">Magnesium</keyword>
<keyword id="KW-0479">Metal-binding</keyword>
<keyword id="KW-1185">Reference proteome</keyword>
<keyword id="KW-0822">Tryptophan biosynthesis</keyword>
<feature type="chain" id="PRO_0000154109" description="Anthranilate synthase component 1">
    <location>
        <begin position="1"/>
        <end position="500"/>
    </location>
</feature>
<feature type="binding site" evidence="2">
    <location>
        <position position="49"/>
    </location>
    <ligand>
        <name>L-tryptophan</name>
        <dbReference type="ChEBI" id="CHEBI:57912"/>
    </ligand>
</feature>
<feature type="binding site" evidence="2">
    <location>
        <begin position="276"/>
        <end position="278"/>
    </location>
    <ligand>
        <name>L-tryptophan</name>
        <dbReference type="ChEBI" id="CHEBI:57912"/>
    </ligand>
</feature>
<feature type="binding site" evidence="2">
    <location>
        <begin position="311"/>
        <end position="312"/>
    </location>
    <ligand>
        <name>chorismate</name>
        <dbReference type="ChEBI" id="CHEBI:29748"/>
    </ligand>
</feature>
<feature type="binding site" evidence="2">
    <location>
        <position position="338"/>
    </location>
    <ligand>
        <name>Mg(2+)</name>
        <dbReference type="ChEBI" id="CHEBI:18420"/>
    </ligand>
</feature>
<feature type="binding site" evidence="2">
    <location>
        <position position="426"/>
    </location>
    <ligand>
        <name>chorismate</name>
        <dbReference type="ChEBI" id="CHEBI:29748"/>
    </ligand>
</feature>
<feature type="binding site" evidence="2">
    <location>
        <position position="446"/>
    </location>
    <ligand>
        <name>chorismate</name>
        <dbReference type="ChEBI" id="CHEBI:29748"/>
    </ligand>
</feature>
<feature type="binding site" evidence="2">
    <location>
        <begin position="460"/>
        <end position="462"/>
    </location>
    <ligand>
        <name>chorismate</name>
        <dbReference type="ChEBI" id="CHEBI:29748"/>
    </ligand>
</feature>
<feature type="binding site" evidence="2">
    <location>
        <position position="462"/>
    </location>
    <ligand>
        <name>chorismate</name>
        <dbReference type="ChEBI" id="CHEBI:29748"/>
    </ligand>
</feature>
<feature type="binding site" evidence="2">
    <location>
        <position position="475"/>
    </location>
    <ligand>
        <name>Mg(2+)</name>
        <dbReference type="ChEBI" id="CHEBI:18420"/>
    </ligand>
</feature>
<feature type="sequence conflict" description="In Ref. 1; CAA70293." evidence="3" ref="1">
    <original>DA</original>
    <variation>EC</variation>
    <location>
        <begin position="196"/>
        <end position="197"/>
    </location>
</feature>
<feature type="sequence conflict" description="In Ref. 1; CAA70293." evidence="3" ref="1">
    <original>V</original>
    <variation>L</variation>
    <location>
        <position position="380"/>
    </location>
</feature>
<dbReference type="EC" id="4.1.3.27"/>
<dbReference type="EMBL" id="Y09072">
    <property type="protein sequence ID" value="CAA70293.1"/>
    <property type="molecule type" value="Genomic_DNA"/>
</dbReference>
<dbReference type="EMBL" id="CP000143">
    <property type="protein sequence ID" value="ABA78154.1"/>
    <property type="status" value="ALT_INIT"/>
    <property type="molecule type" value="Genomic_DNA"/>
</dbReference>
<dbReference type="RefSeq" id="YP_352055.1">
    <property type="nucleotide sequence ID" value="NC_007493.2"/>
</dbReference>
<dbReference type="SMR" id="P95646"/>
<dbReference type="STRING" id="272943.RSP_2004"/>
<dbReference type="EnsemblBacteria" id="ABA78154">
    <property type="protein sequence ID" value="ABA78154"/>
    <property type="gene ID" value="RSP_2004"/>
</dbReference>
<dbReference type="KEGG" id="rsp:RSP_2004"/>
<dbReference type="PATRIC" id="fig|272943.9.peg.893"/>
<dbReference type="eggNOG" id="COG0147">
    <property type="taxonomic scope" value="Bacteria"/>
</dbReference>
<dbReference type="OrthoDB" id="9803598at2"/>
<dbReference type="UniPathway" id="UPA00035">
    <property type="reaction ID" value="UER00040"/>
</dbReference>
<dbReference type="Proteomes" id="UP000002703">
    <property type="component" value="Chromosome 1"/>
</dbReference>
<dbReference type="GO" id="GO:0004049">
    <property type="term" value="F:anthranilate synthase activity"/>
    <property type="evidence" value="ECO:0007669"/>
    <property type="project" value="UniProtKB-EC"/>
</dbReference>
<dbReference type="GO" id="GO:0046872">
    <property type="term" value="F:metal ion binding"/>
    <property type="evidence" value="ECO:0007669"/>
    <property type="project" value="UniProtKB-KW"/>
</dbReference>
<dbReference type="GO" id="GO:0000162">
    <property type="term" value="P:L-tryptophan biosynthetic process"/>
    <property type="evidence" value="ECO:0007669"/>
    <property type="project" value="UniProtKB-UniPathway"/>
</dbReference>
<dbReference type="Gene3D" id="3.60.120.10">
    <property type="entry name" value="Anthranilate synthase"/>
    <property type="match status" value="1"/>
</dbReference>
<dbReference type="InterPro" id="IPR005801">
    <property type="entry name" value="ADC_synthase"/>
</dbReference>
<dbReference type="InterPro" id="IPR019999">
    <property type="entry name" value="Anth_synth_I-like"/>
</dbReference>
<dbReference type="InterPro" id="IPR006805">
    <property type="entry name" value="Anth_synth_I_N"/>
</dbReference>
<dbReference type="InterPro" id="IPR005256">
    <property type="entry name" value="Anth_synth_I_PabB"/>
</dbReference>
<dbReference type="InterPro" id="IPR015890">
    <property type="entry name" value="Chorismate_C"/>
</dbReference>
<dbReference type="NCBIfam" id="TIGR00564">
    <property type="entry name" value="trpE_most"/>
    <property type="match status" value="1"/>
</dbReference>
<dbReference type="PANTHER" id="PTHR11236">
    <property type="entry name" value="AMINOBENZOATE/ANTHRANILATE SYNTHASE"/>
    <property type="match status" value="1"/>
</dbReference>
<dbReference type="PANTHER" id="PTHR11236:SF48">
    <property type="entry name" value="ISOCHORISMATE SYNTHASE MENF"/>
    <property type="match status" value="1"/>
</dbReference>
<dbReference type="Pfam" id="PF04715">
    <property type="entry name" value="Anth_synt_I_N"/>
    <property type="match status" value="1"/>
</dbReference>
<dbReference type="Pfam" id="PF00425">
    <property type="entry name" value="Chorismate_bind"/>
    <property type="match status" value="1"/>
</dbReference>
<dbReference type="PRINTS" id="PR00095">
    <property type="entry name" value="ANTSNTHASEI"/>
</dbReference>
<dbReference type="SUPFAM" id="SSF56322">
    <property type="entry name" value="ADC synthase"/>
    <property type="match status" value="1"/>
</dbReference>
<proteinExistence type="inferred from homology"/>
<organism>
    <name type="scientific">Cereibacter sphaeroides (strain ATCC 17023 / DSM 158 / JCM 6121 / CCUG 31486 / LMG 2827 / NBRC 12203 / NCIMB 8253 / ATH 2.4.1.)</name>
    <name type="common">Rhodobacter sphaeroides</name>
    <dbReference type="NCBI Taxonomy" id="272943"/>
    <lineage>
        <taxon>Bacteria</taxon>
        <taxon>Pseudomonadati</taxon>
        <taxon>Pseudomonadota</taxon>
        <taxon>Alphaproteobacteria</taxon>
        <taxon>Rhodobacterales</taxon>
        <taxon>Paracoccaceae</taxon>
        <taxon>Cereibacter</taxon>
    </lineage>
</organism>
<accession>P95646</accession>
<accession>Q3J4Y0</accession>
<comment type="function">
    <text evidence="1">Part of a heterotetrameric complex that catalyzes the two-step biosynthesis of anthranilate, an intermediate in the biosynthesis of L-tryptophan. In the first step, the glutamine-binding beta subunit (TrpG) of anthranilate synthase (AS) provides the glutamine amidotransferase activity which generates ammonia as a substrate that, along with chorismate, is used in the second step, catalyzed by the large alpha subunit of AS (TrpE) to produce anthranilate. In the absence of TrpG, TrpE can synthesize anthranilate directly from chorismate and high concentrations of ammonia (By similarity).</text>
</comment>
<comment type="catalytic activity">
    <reaction>
        <text>chorismate + L-glutamine = anthranilate + pyruvate + L-glutamate + H(+)</text>
        <dbReference type="Rhea" id="RHEA:21732"/>
        <dbReference type="ChEBI" id="CHEBI:15361"/>
        <dbReference type="ChEBI" id="CHEBI:15378"/>
        <dbReference type="ChEBI" id="CHEBI:16567"/>
        <dbReference type="ChEBI" id="CHEBI:29748"/>
        <dbReference type="ChEBI" id="CHEBI:29985"/>
        <dbReference type="ChEBI" id="CHEBI:58359"/>
        <dbReference type="EC" id="4.1.3.27"/>
    </reaction>
</comment>
<comment type="cofactor">
    <cofactor evidence="2">
        <name>Mg(2+)</name>
        <dbReference type="ChEBI" id="CHEBI:18420"/>
    </cofactor>
    <text evidence="2">Binds 1 Mg(2+) ion per subunit.</text>
</comment>
<comment type="activity regulation">
    <text evidence="1">Feedback inhibited by tryptophan.</text>
</comment>
<comment type="pathway">
    <text>Amino-acid biosynthesis; L-tryptophan biosynthesis; L-tryptophan from chorismate: step 1/5.</text>
</comment>
<comment type="subunit">
    <text evidence="1">Heterotetramer consisting of two non-identical subunits: a beta subunit (TrpG) and a large alpha subunit (TrpE).</text>
</comment>
<comment type="similarity">
    <text evidence="3">Belongs to the anthranilate synthase component I family.</text>
</comment>
<comment type="sequence caution" evidence="3">
    <conflict type="erroneous initiation">
        <sequence resource="EMBL-CDS" id="ABA78154"/>
    </conflict>
    <text>Extended N-terminus.</text>
</comment>
<reference key="1">
    <citation type="submission" date="1997-02" db="EMBL/GenBank/DDBJ databases">
        <authorList>
            <person name="Rosanas A."/>
            <person name="Barbe J."/>
            <person name="Gibert I."/>
        </authorList>
    </citation>
    <scope>NUCLEOTIDE SEQUENCE [GENOMIC DNA]</scope>
</reference>
<reference key="2">
    <citation type="submission" date="2005-09" db="EMBL/GenBank/DDBJ databases">
        <title>Complete sequence of chromosome 1 of Rhodobacter sphaeroides 2.4.1.</title>
        <authorList>
            <person name="Copeland A."/>
            <person name="Lucas S."/>
            <person name="Lapidus A."/>
            <person name="Barry K."/>
            <person name="Detter J.C."/>
            <person name="Glavina T."/>
            <person name="Hammon N."/>
            <person name="Israni S."/>
            <person name="Pitluck S."/>
            <person name="Richardson P."/>
            <person name="Mackenzie C."/>
            <person name="Choudhary M."/>
            <person name="Larimer F."/>
            <person name="Hauser L.J."/>
            <person name="Land M."/>
            <person name="Donohue T.J."/>
            <person name="Kaplan S."/>
        </authorList>
    </citation>
    <scope>NUCLEOTIDE SEQUENCE [LARGE SCALE GENOMIC DNA]</scope>
    <source>
        <strain>ATCC 17023 / DSM 158 / JCM 6121 / CCUG 31486 / LMG 2827 / NBRC 12203 / NCIMB 8253 / ATH 2.4.1.</strain>
    </source>
</reference>
<sequence>MTSFESFERGWKAGQNQIVYARLTADLDTPVSLMLKLAEARTDTFMLESVTGGEIRGRYSVVGMKPDLIWQCHGQDSRINREARFDRQAFQPLEGHPLETLRALIAESRIEMPADLPPIAAGLFGYLGYDMIRLVEHLPGINPDPLGLPDAVLMRPSVVAVLDGVKGEVTVVAPAWVSSGLSARAAYAQAAERVMDALRDLDRAPPAQRDFGEVAQVGEMRSNFTHEGYKAAVEKAKDYIRAGDIFQVVPSQRWAQDFRLPPFALYRSLRKTNPSPFMFFFNFGGFQVVGASPEILVRLRDREVTVRPIAGTRKRGATPEEDRALEADLLSDKKELAEHLMLLDLGRNDVGRVAKIGTVRPTEKFIIERYSHVMHIVSNVVGEIAEGEDALSALLAGLPAGTVSGAPKVRAMEIIDELEPEKRGVYGGGVGYFAANGEMDFCIALRTAVLKDETLYIQSGGGVVYDSDPEAEYQETVNKARALRRAAEDAGLFARRAGNG</sequence>
<evidence type="ECO:0000250" key="1"/>
<evidence type="ECO:0000250" key="2">
    <source>
        <dbReference type="UniProtKB" id="P00897"/>
    </source>
</evidence>
<evidence type="ECO:0000305" key="3"/>
<name>TRPE_CERS4</name>
<gene>
    <name type="primary">trpE</name>
    <name type="ordered locus">RHOS4_05860</name>
    <name type="ORF">RSP_2004</name>
</gene>
<protein>
    <recommendedName>
        <fullName>Anthranilate synthase component 1</fullName>
        <shortName>AS</shortName>
        <shortName>ASI</shortName>
        <ecNumber>4.1.3.27</ecNumber>
    </recommendedName>
</protein>